<name>DCOR_DICDI</name>
<feature type="chain" id="PRO_0000328317" description="Probable ornithine decarboxylase">
    <location>
        <begin position="1"/>
        <end position="461"/>
    </location>
</feature>
<feature type="region of interest" description="Disordered" evidence="4">
    <location>
        <begin position="1"/>
        <end position="35"/>
    </location>
</feature>
<feature type="compositionally biased region" description="Low complexity" evidence="4">
    <location>
        <begin position="13"/>
        <end position="22"/>
    </location>
</feature>
<feature type="compositionally biased region" description="Basic and acidic residues" evidence="4">
    <location>
        <begin position="23"/>
        <end position="32"/>
    </location>
</feature>
<feature type="active site" description="Proton donor; shared with dimeric partner" evidence="3">
    <location>
        <position position="402"/>
    </location>
</feature>
<feature type="binding site" evidence="3">
    <location>
        <position position="247"/>
    </location>
    <ligand>
        <name>pyridoxal 5'-phosphate</name>
        <dbReference type="ChEBI" id="CHEBI:597326"/>
    </ligand>
</feature>
<feature type="binding site" evidence="3">
    <location>
        <position position="284"/>
    </location>
    <ligand>
        <name>pyridoxal 5'-phosphate</name>
        <dbReference type="ChEBI" id="CHEBI:597326"/>
    </ligand>
</feature>
<feature type="binding site" evidence="3">
    <location>
        <begin position="317"/>
        <end position="320"/>
    </location>
    <ligand>
        <name>pyridoxal 5'-phosphate</name>
        <dbReference type="ChEBI" id="CHEBI:597326"/>
    </ligand>
</feature>
<feature type="binding site" description="in other chain" evidence="2">
    <location>
        <begin position="375"/>
        <end position="376"/>
    </location>
    <ligand>
        <name>substrate</name>
        <note>ligand shared between dimeric partners</note>
    </ligand>
</feature>
<feature type="binding site" evidence="2">
    <location>
        <position position="403"/>
    </location>
    <ligand>
        <name>substrate</name>
        <note>ligand shared between dimeric partners</note>
    </ligand>
</feature>
<feature type="binding site" evidence="3">
    <location>
        <position position="431"/>
    </location>
    <ligand>
        <name>pyridoxal 5'-phosphate</name>
        <dbReference type="ChEBI" id="CHEBI:597326"/>
    </ligand>
</feature>
<feature type="site" description="Stacks against the aromatic ring of pyridoxal phosphate and stabilizes reaction intermediates" evidence="1">
    <location>
        <position position="244"/>
    </location>
</feature>
<feature type="modified residue" description="N6-(pyridoxal phosphate)lysine" evidence="3">
    <location>
        <position position="116"/>
    </location>
</feature>
<reference key="1">
    <citation type="journal article" date="2005" name="Nature">
        <title>The genome of the social amoeba Dictyostelium discoideum.</title>
        <authorList>
            <person name="Eichinger L."/>
            <person name="Pachebat J.A."/>
            <person name="Gloeckner G."/>
            <person name="Rajandream M.A."/>
            <person name="Sucgang R."/>
            <person name="Berriman M."/>
            <person name="Song J."/>
            <person name="Olsen R."/>
            <person name="Szafranski K."/>
            <person name="Xu Q."/>
            <person name="Tunggal B."/>
            <person name="Kummerfeld S."/>
            <person name="Madera M."/>
            <person name="Konfortov B.A."/>
            <person name="Rivero F."/>
            <person name="Bankier A.T."/>
            <person name="Lehmann R."/>
            <person name="Hamlin N."/>
            <person name="Davies R."/>
            <person name="Gaudet P."/>
            <person name="Fey P."/>
            <person name="Pilcher K."/>
            <person name="Chen G."/>
            <person name="Saunders D."/>
            <person name="Sodergren E.J."/>
            <person name="Davis P."/>
            <person name="Kerhornou A."/>
            <person name="Nie X."/>
            <person name="Hall N."/>
            <person name="Anjard C."/>
            <person name="Hemphill L."/>
            <person name="Bason N."/>
            <person name="Farbrother P."/>
            <person name="Desany B."/>
            <person name="Just E."/>
            <person name="Morio T."/>
            <person name="Rost R."/>
            <person name="Churcher C.M."/>
            <person name="Cooper J."/>
            <person name="Haydock S."/>
            <person name="van Driessche N."/>
            <person name="Cronin A."/>
            <person name="Goodhead I."/>
            <person name="Muzny D.M."/>
            <person name="Mourier T."/>
            <person name="Pain A."/>
            <person name="Lu M."/>
            <person name="Harper D."/>
            <person name="Lindsay R."/>
            <person name="Hauser H."/>
            <person name="James K.D."/>
            <person name="Quiles M."/>
            <person name="Madan Babu M."/>
            <person name="Saito T."/>
            <person name="Buchrieser C."/>
            <person name="Wardroper A."/>
            <person name="Felder M."/>
            <person name="Thangavelu M."/>
            <person name="Johnson D."/>
            <person name="Knights A."/>
            <person name="Loulseged H."/>
            <person name="Mungall K.L."/>
            <person name="Oliver K."/>
            <person name="Price C."/>
            <person name="Quail M.A."/>
            <person name="Urushihara H."/>
            <person name="Hernandez J."/>
            <person name="Rabbinowitsch E."/>
            <person name="Steffen D."/>
            <person name="Sanders M."/>
            <person name="Ma J."/>
            <person name="Kohara Y."/>
            <person name="Sharp S."/>
            <person name="Simmonds M.N."/>
            <person name="Spiegler S."/>
            <person name="Tivey A."/>
            <person name="Sugano S."/>
            <person name="White B."/>
            <person name="Walker D."/>
            <person name="Woodward J.R."/>
            <person name="Winckler T."/>
            <person name="Tanaka Y."/>
            <person name="Shaulsky G."/>
            <person name="Schleicher M."/>
            <person name="Weinstock G.M."/>
            <person name="Rosenthal A."/>
            <person name="Cox E.C."/>
            <person name="Chisholm R.L."/>
            <person name="Gibbs R.A."/>
            <person name="Loomis W.F."/>
            <person name="Platzer M."/>
            <person name="Kay R.R."/>
            <person name="Williams J.G."/>
            <person name="Dear P.H."/>
            <person name="Noegel A.A."/>
            <person name="Barrell B.G."/>
            <person name="Kuspa A."/>
        </authorList>
    </citation>
    <scope>NUCLEOTIDE SEQUENCE [LARGE SCALE GENOMIC DNA]</scope>
    <source>
        <strain>AX4</strain>
    </source>
</reference>
<gene>
    <name type="primary">odc</name>
    <name type="ORF">DDB_G0281109</name>
</gene>
<organism>
    <name type="scientific">Dictyostelium discoideum</name>
    <name type="common">Social amoeba</name>
    <dbReference type="NCBI Taxonomy" id="44689"/>
    <lineage>
        <taxon>Eukaryota</taxon>
        <taxon>Amoebozoa</taxon>
        <taxon>Evosea</taxon>
        <taxon>Eumycetozoa</taxon>
        <taxon>Dictyostelia</taxon>
        <taxon>Dictyosteliales</taxon>
        <taxon>Dictyosteliaceae</taxon>
        <taxon>Dictyostelium</taxon>
    </lineage>
</organism>
<proteinExistence type="inferred from homology"/>
<evidence type="ECO:0000250" key="1">
    <source>
        <dbReference type="UniProtKB" id="P00860"/>
    </source>
</evidence>
<evidence type="ECO:0000250" key="2">
    <source>
        <dbReference type="UniProtKB" id="P07805"/>
    </source>
</evidence>
<evidence type="ECO:0000250" key="3">
    <source>
        <dbReference type="UniProtKB" id="P11926"/>
    </source>
</evidence>
<evidence type="ECO:0000256" key="4">
    <source>
        <dbReference type="SAM" id="MobiDB-lite"/>
    </source>
</evidence>
<evidence type="ECO:0000305" key="5"/>
<accession>Q54UF3</accession>
<keyword id="KW-0210">Decarboxylase</keyword>
<keyword id="KW-0456">Lyase</keyword>
<keyword id="KW-0620">Polyamine biosynthesis</keyword>
<keyword id="KW-0663">Pyridoxal phosphate</keyword>
<keyword id="KW-1185">Reference proteome</keyword>
<dbReference type="EC" id="4.1.1.17"/>
<dbReference type="EMBL" id="AAFI02000040">
    <property type="protein sequence ID" value="EAL66851.1"/>
    <property type="molecule type" value="Genomic_DNA"/>
</dbReference>
<dbReference type="RefSeq" id="XP_640823.1">
    <property type="nucleotide sequence ID" value="XM_635731.1"/>
</dbReference>
<dbReference type="SMR" id="Q54UF3"/>
<dbReference type="FunCoup" id="Q54UF3">
    <property type="interactions" value="113"/>
</dbReference>
<dbReference type="STRING" id="44689.Q54UF3"/>
<dbReference type="PaxDb" id="44689-DDB0237755"/>
<dbReference type="EnsemblProtists" id="EAL66851">
    <property type="protein sequence ID" value="EAL66851"/>
    <property type="gene ID" value="DDB_G0281109"/>
</dbReference>
<dbReference type="GeneID" id="8622878"/>
<dbReference type="KEGG" id="ddi:DDB_G0281109"/>
<dbReference type="dictyBase" id="DDB_G0281109">
    <property type="gene designation" value="odc"/>
</dbReference>
<dbReference type="VEuPathDB" id="AmoebaDB:DDB_G0281109"/>
<dbReference type="eggNOG" id="KOG0622">
    <property type="taxonomic scope" value="Eukaryota"/>
</dbReference>
<dbReference type="HOGENOM" id="CLU_026444_1_1_1"/>
<dbReference type="InParanoid" id="Q54UF3"/>
<dbReference type="OMA" id="SFFVCDL"/>
<dbReference type="PhylomeDB" id="Q54UF3"/>
<dbReference type="BRENDA" id="4.1.1.17">
    <property type="organism ID" value="1939"/>
</dbReference>
<dbReference type="Reactome" id="R-DDI-351143">
    <property type="pathway name" value="Agmatine biosynthesis"/>
</dbReference>
<dbReference type="Reactome" id="R-DDI-351202">
    <property type="pathway name" value="Metabolism of polyamines"/>
</dbReference>
<dbReference type="UniPathway" id="UPA00535">
    <property type="reaction ID" value="UER00288"/>
</dbReference>
<dbReference type="PRO" id="PR:Q54UF3"/>
<dbReference type="Proteomes" id="UP000002195">
    <property type="component" value="Chromosome 3"/>
</dbReference>
<dbReference type="GO" id="GO:0005737">
    <property type="term" value="C:cytoplasm"/>
    <property type="evidence" value="ECO:0000318"/>
    <property type="project" value="GO_Central"/>
</dbReference>
<dbReference type="GO" id="GO:0031410">
    <property type="term" value="C:cytoplasmic vesicle"/>
    <property type="evidence" value="ECO:0000314"/>
    <property type="project" value="dictyBase"/>
</dbReference>
<dbReference type="GO" id="GO:0004586">
    <property type="term" value="F:ornithine decarboxylase activity"/>
    <property type="evidence" value="ECO:0000250"/>
    <property type="project" value="dictyBase"/>
</dbReference>
<dbReference type="GO" id="GO:0009446">
    <property type="term" value="P:putrescine biosynthetic process"/>
    <property type="evidence" value="ECO:0000315"/>
    <property type="project" value="dictyBase"/>
</dbReference>
<dbReference type="GO" id="GO:0033387">
    <property type="term" value="P:putrescine biosynthetic process from arginine, via ornithine"/>
    <property type="evidence" value="ECO:0000318"/>
    <property type="project" value="GO_Central"/>
</dbReference>
<dbReference type="CDD" id="cd00622">
    <property type="entry name" value="PLPDE_III_ODC"/>
    <property type="match status" value="1"/>
</dbReference>
<dbReference type="FunFam" id="3.20.20.10:FF:000005">
    <property type="entry name" value="Ornithine decarboxylase"/>
    <property type="match status" value="1"/>
</dbReference>
<dbReference type="Gene3D" id="3.20.20.10">
    <property type="entry name" value="Alanine racemase"/>
    <property type="match status" value="1"/>
</dbReference>
<dbReference type="Gene3D" id="2.40.37.10">
    <property type="entry name" value="Lyase, Ornithine Decarboxylase, Chain A, domain 1"/>
    <property type="match status" value="1"/>
</dbReference>
<dbReference type="InterPro" id="IPR009006">
    <property type="entry name" value="Ala_racemase/Decarboxylase_C"/>
</dbReference>
<dbReference type="InterPro" id="IPR022643">
    <property type="entry name" value="De-COase2_C"/>
</dbReference>
<dbReference type="InterPro" id="IPR022644">
    <property type="entry name" value="De-COase2_N"/>
</dbReference>
<dbReference type="InterPro" id="IPR022653">
    <property type="entry name" value="De-COase2_pyr-phos_BS"/>
</dbReference>
<dbReference type="InterPro" id="IPR000183">
    <property type="entry name" value="Orn/DAP/Arg_de-COase"/>
</dbReference>
<dbReference type="InterPro" id="IPR002433">
    <property type="entry name" value="Orn_de-COase"/>
</dbReference>
<dbReference type="InterPro" id="IPR029066">
    <property type="entry name" value="PLP-binding_barrel"/>
</dbReference>
<dbReference type="PANTHER" id="PTHR11482">
    <property type="entry name" value="ARGININE/DIAMINOPIMELATE/ORNITHINE DECARBOXYLASE"/>
    <property type="match status" value="1"/>
</dbReference>
<dbReference type="PANTHER" id="PTHR11482:SF6">
    <property type="entry name" value="ORNITHINE DECARBOXYLASE 1-RELATED"/>
    <property type="match status" value="1"/>
</dbReference>
<dbReference type="Pfam" id="PF02784">
    <property type="entry name" value="Orn_Arg_deC_N"/>
    <property type="match status" value="1"/>
</dbReference>
<dbReference type="Pfam" id="PF00278">
    <property type="entry name" value="Orn_DAP_Arg_deC"/>
    <property type="match status" value="1"/>
</dbReference>
<dbReference type="PRINTS" id="PR01179">
    <property type="entry name" value="ODADCRBXLASE"/>
</dbReference>
<dbReference type="PRINTS" id="PR01182">
    <property type="entry name" value="ORNDCRBXLASE"/>
</dbReference>
<dbReference type="SUPFAM" id="SSF50621">
    <property type="entry name" value="Alanine racemase C-terminal domain-like"/>
    <property type="match status" value="1"/>
</dbReference>
<dbReference type="SUPFAM" id="SSF51419">
    <property type="entry name" value="PLP-binding barrel"/>
    <property type="match status" value="1"/>
</dbReference>
<dbReference type="PROSITE" id="PS00878">
    <property type="entry name" value="ODR_DC_2_1"/>
    <property type="match status" value="1"/>
</dbReference>
<dbReference type="PROSITE" id="PS00879">
    <property type="entry name" value="ODR_DC_2_2"/>
    <property type="match status" value="1"/>
</dbReference>
<comment type="function">
    <text evidence="3">Catalyzes the first and rate-limiting step of polyamine biosynthesis that converts ornithine into putrescine, which is the precursor for the polyamines, spermidine and spermine. Polyamines are essential for cell proliferation and are implicated in cellular processes, ranging from DNA replication to apoptosis.</text>
</comment>
<comment type="catalytic activity">
    <reaction evidence="3">
        <text>L-ornithine + H(+) = putrescine + CO2</text>
        <dbReference type="Rhea" id="RHEA:22964"/>
        <dbReference type="ChEBI" id="CHEBI:15378"/>
        <dbReference type="ChEBI" id="CHEBI:16526"/>
        <dbReference type="ChEBI" id="CHEBI:46911"/>
        <dbReference type="ChEBI" id="CHEBI:326268"/>
        <dbReference type="EC" id="4.1.1.17"/>
    </reaction>
</comment>
<comment type="cofactor">
    <cofactor evidence="3">
        <name>pyridoxal 5'-phosphate</name>
        <dbReference type="ChEBI" id="CHEBI:597326"/>
    </cofactor>
</comment>
<comment type="activity regulation">
    <text evidence="3">Inhibited by antizyme (AZ) in response to polyamine levels. AZ inhibits the assembly of the functional homodimer by binding to ODC monomers and targeting them for ubiquitin-independent proteolytic destruction by the 26S proteasome.</text>
</comment>
<comment type="pathway">
    <text>Amine and polyamine biosynthesis; putrescine biosynthesis via L-ornithine pathway; putrescine from L-ornithine: step 1/1.</text>
</comment>
<comment type="subunit">
    <text evidence="3">Homodimer. Only the dimer is catalytically active, as the active sites are constructed of residues from both monomers.</text>
</comment>
<comment type="similarity">
    <text evidence="5">Belongs to the Orn/Lys/Arg decarboxylase class-II family.</text>
</comment>
<protein>
    <recommendedName>
        <fullName>Probable ornithine decarboxylase</fullName>
        <shortName>ODC</shortName>
        <ecNumber>4.1.1.17</ecNumber>
    </recommendedName>
</protein>
<sequence length="461" mass="51695">MTGTKRNGEEVVNENNNNNVAEETNKKAKVDESSTETTESTSCSLLSRCEKLDIVRKELDVKPWDQGKVTIQELITSLLDKTDRDAFFVADVGVIIKQWQKWVKNLPNVKPYYAVKCNPTVGVLRVLDALGTNYDCASRTEIESVLNLGVDPSRIIYANPCKQISALKFARAHNVKLMTFDNLSELEKIEKFFPEAELVLRIAPDDSKSVMRFGSKFGVHIDDCNDLLEMAKEMNLKVVGVSFHVGSGCQSGDSYADALIMVKSVFDMAKKLNMELTLVDVGGGFTGSDDEKFNAFTKVIREKTAELFSPNVKIIAEPGRYFAAQSHTLAVTVISKRSIKQEDNRQHPRRTSNNMRQYNYYLADGVYGSFNNTKFDYAKVEPLLLKPSTKQPTPCTLFGPTCDSIDVVLKDTQIPELKIGDWLYFQDMGAYTIASSSSFNGFCPPPVYYYNSIPEEELKNL</sequence>